<dbReference type="EMBL" id="CP001079">
    <property type="protein sequence ID" value="ACM49214.1"/>
    <property type="molecule type" value="Genomic_DNA"/>
</dbReference>
<dbReference type="RefSeq" id="WP_010264096.1">
    <property type="nucleotide sequence ID" value="NZ_AFMS01000073.1"/>
</dbReference>
<dbReference type="SMR" id="B9KIA2"/>
<dbReference type="STRING" id="320483.AMF_345"/>
<dbReference type="GeneID" id="7398452"/>
<dbReference type="KEGG" id="amf:AMF_345"/>
<dbReference type="PATRIC" id="fig|320483.3.peg.404"/>
<dbReference type="eggNOG" id="COG0231">
    <property type="taxonomic scope" value="Bacteria"/>
</dbReference>
<dbReference type="HOGENOM" id="CLU_074944_1_1_5"/>
<dbReference type="UniPathway" id="UPA00345"/>
<dbReference type="Proteomes" id="UP000007307">
    <property type="component" value="Chromosome"/>
</dbReference>
<dbReference type="GO" id="GO:0005737">
    <property type="term" value="C:cytoplasm"/>
    <property type="evidence" value="ECO:0007669"/>
    <property type="project" value="UniProtKB-SubCell"/>
</dbReference>
<dbReference type="GO" id="GO:0003746">
    <property type="term" value="F:translation elongation factor activity"/>
    <property type="evidence" value="ECO:0007669"/>
    <property type="project" value="UniProtKB-UniRule"/>
</dbReference>
<dbReference type="GO" id="GO:0043043">
    <property type="term" value="P:peptide biosynthetic process"/>
    <property type="evidence" value="ECO:0007669"/>
    <property type="project" value="InterPro"/>
</dbReference>
<dbReference type="CDD" id="cd05794">
    <property type="entry name" value="S1_EF-P_repeat_2"/>
    <property type="match status" value="1"/>
</dbReference>
<dbReference type="FunFam" id="2.40.50.140:FF:000004">
    <property type="entry name" value="Elongation factor P"/>
    <property type="match status" value="1"/>
</dbReference>
<dbReference type="Gene3D" id="2.30.30.30">
    <property type="match status" value="1"/>
</dbReference>
<dbReference type="Gene3D" id="2.40.50.140">
    <property type="entry name" value="Nucleic acid-binding proteins"/>
    <property type="match status" value="2"/>
</dbReference>
<dbReference type="HAMAP" id="MF_00141">
    <property type="entry name" value="EF_P"/>
    <property type="match status" value="1"/>
</dbReference>
<dbReference type="InterPro" id="IPR015365">
    <property type="entry name" value="Elong-fact-P_C"/>
</dbReference>
<dbReference type="InterPro" id="IPR012340">
    <property type="entry name" value="NA-bd_OB-fold"/>
</dbReference>
<dbReference type="InterPro" id="IPR014722">
    <property type="entry name" value="Rib_uL2_dom2"/>
</dbReference>
<dbReference type="InterPro" id="IPR020599">
    <property type="entry name" value="Transl_elong_fac_P/YeiP"/>
</dbReference>
<dbReference type="InterPro" id="IPR013185">
    <property type="entry name" value="Transl_elong_KOW-like"/>
</dbReference>
<dbReference type="InterPro" id="IPR001059">
    <property type="entry name" value="Transl_elong_P/YeiP_cen"/>
</dbReference>
<dbReference type="InterPro" id="IPR013852">
    <property type="entry name" value="Transl_elong_P/YeiP_CS"/>
</dbReference>
<dbReference type="InterPro" id="IPR011768">
    <property type="entry name" value="Transl_elongation_fac_P"/>
</dbReference>
<dbReference type="InterPro" id="IPR008991">
    <property type="entry name" value="Translation_prot_SH3-like_sf"/>
</dbReference>
<dbReference type="NCBIfam" id="TIGR00038">
    <property type="entry name" value="efp"/>
    <property type="match status" value="1"/>
</dbReference>
<dbReference type="NCBIfam" id="NF001810">
    <property type="entry name" value="PRK00529.1"/>
    <property type="match status" value="1"/>
</dbReference>
<dbReference type="PANTHER" id="PTHR30053">
    <property type="entry name" value="ELONGATION FACTOR P"/>
    <property type="match status" value="1"/>
</dbReference>
<dbReference type="PANTHER" id="PTHR30053:SF14">
    <property type="entry name" value="TRANSLATION ELONGATION FACTOR KOW-LIKE DOMAIN-CONTAINING PROTEIN"/>
    <property type="match status" value="1"/>
</dbReference>
<dbReference type="Pfam" id="PF01132">
    <property type="entry name" value="EFP"/>
    <property type="match status" value="1"/>
</dbReference>
<dbReference type="Pfam" id="PF08207">
    <property type="entry name" value="EFP_N"/>
    <property type="match status" value="1"/>
</dbReference>
<dbReference type="Pfam" id="PF09285">
    <property type="entry name" value="Elong-fact-P_C"/>
    <property type="match status" value="1"/>
</dbReference>
<dbReference type="PIRSF" id="PIRSF005901">
    <property type="entry name" value="EF-P"/>
    <property type="match status" value="1"/>
</dbReference>
<dbReference type="SMART" id="SM01185">
    <property type="entry name" value="EFP"/>
    <property type="match status" value="1"/>
</dbReference>
<dbReference type="SMART" id="SM00841">
    <property type="entry name" value="Elong-fact-P_C"/>
    <property type="match status" value="1"/>
</dbReference>
<dbReference type="SUPFAM" id="SSF50249">
    <property type="entry name" value="Nucleic acid-binding proteins"/>
    <property type="match status" value="2"/>
</dbReference>
<dbReference type="SUPFAM" id="SSF50104">
    <property type="entry name" value="Translation proteins SH3-like domain"/>
    <property type="match status" value="1"/>
</dbReference>
<dbReference type="PROSITE" id="PS01275">
    <property type="entry name" value="EFP"/>
    <property type="match status" value="1"/>
</dbReference>
<feature type="chain" id="PRO_1000122984" description="Elongation factor P">
    <location>
        <begin position="1"/>
        <end position="188"/>
    </location>
</feature>
<comment type="function">
    <text evidence="1">Involved in peptide bond synthesis. Stimulates efficient translation and peptide-bond synthesis on native or reconstituted 70S ribosomes in vitro. Probably functions indirectly by altering the affinity of the ribosome for aminoacyl-tRNA, thus increasing their reactivity as acceptors for peptidyl transferase.</text>
</comment>
<comment type="pathway">
    <text evidence="1">Protein biosynthesis; polypeptide chain elongation.</text>
</comment>
<comment type="subcellular location">
    <subcellularLocation>
        <location evidence="1">Cytoplasm</location>
    </subcellularLocation>
</comment>
<comment type="similarity">
    <text evidence="1">Belongs to the elongation factor P family.</text>
</comment>
<gene>
    <name evidence="1" type="primary">efp</name>
    <name type="ordered locus">AMF_345</name>
</gene>
<name>EFP_ANAMF</name>
<keyword id="KW-0963">Cytoplasm</keyword>
<keyword id="KW-0251">Elongation factor</keyword>
<keyword id="KW-0648">Protein biosynthesis</keyword>
<keyword id="KW-1185">Reference proteome</keyword>
<protein>
    <recommendedName>
        <fullName evidence="1">Elongation factor P</fullName>
        <shortName evidence="1">EF-P</shortName>
    </recommendedName>
</protein>
<reference key="1">
    <citation type="journal article" date="2009" name="BMC Genomics">
        <title>Conservation in the face of diversity: multistrain analysis of an intracellular bacterium.</title>
        <authorList>
            <person name="Dark M.J."/>
            <person name="Herndon D.R."/>
            <person name="Kappmeyer L.S."/>
            <person name="Gonzales M.P."/>
            <person name="Nordeen E."/>
            <person name="Palmer G.H."/>
            <person name="Knowles D.P. Jr."/>
            <person name="Brayton K.A."/>
        </authorList>
    </citation>
    <scope>NUCLEOTIDE SEQUENCE [LARGE SCALE GENOMIC DNA]</scope>
    <source>
        <strain>Florida</strain>
    </source>
</reference>
<proteinExistence type="inferred from homology"/>
<sequence>MAERGSDIRPGQILDHNGSLYLVVKTMHTQPGKGGAYIQAELKNLKTGAKYQERFRSDGYVKRAIVEEVEYQYIFGDGALLTLMNTATYEQVSISADMLGEKGVYLKEGIILTLSFYQGQVVAARVPDYVVLEVVETESVIKGQTASSSYKSAVLENGERISVPPFIKVGERIVVYTVDDTYYERAKD</sequence>
<accession>B9KIA2</accession>
<organism>
    <name type="scientific">Anaplasma marginale (strain Florida)</name>
    <dbReference type="NCBI Taxonomy" id="320483"/>
    <lineage>
        <taxon>Bacteria</taxon>
        <taxon>Pseudomonadati</taxon>
        <taxon>Pseudomonadota</taxon>
        <taxon>Alphaproteobacteria</taxon>
        <taxon>Rickettsiales</taxon>
        <taxon>Anaplasmataceae</taxon>
        <taxon>Anaplasma</taxon>
    </lineage>
</organism>
<evidence type="ECO:0000255" key="1">
    <source>
        <dbReference type="HAMAP-Rule" id="MF_00141"/>
    </source>
</evidence>